<evidence type="ECO:0000255" key="1">
    <source>
        <dbReference type="HAMAP-Rule" id="MF_00051"/>
    </source>
</evidence>
<feature type="chain" id="PRO_0000113672" description="Serine hydroxymethyltransferase">
    <location>
        <begin position="1"/>
        <end position="420"/>
    </location>
</feature>
<feature type="binding site" evidence="1">
    <location>
        <position position="121"/>
    </location>
    <ligand>
        <name>(6S)-5,6,7,8-tetrahydrofolate</name>
        <dbReference type="ChEBI" id="CHEBI:57453"/>
    </ligand>
</feature>
<feature type="binding site" evidence="1">
    <location>
        <begin position="125"/>
        <end position="127"/>
    </location>
    <ligand>
        <name>(6S)-5,6,7,8-tetrahydrofolate</name>
        <dbReference type="ChEBI" id="CHEBI:57453"/>
    </ligand>
</feature>
<feature type="site" description="Plays an important role in substrate specificity" evidence="1">
    <location>
        <position position="228"/>
    </location>
</feature>
<feature type="modified residue" description="N6-(pyridoxal phosphate)lysine" evidence="1">
    <location>
        <position position="229"/>
    </location>
</feature>
<organism>
    <name type="scientific">Streptomyces coelicolor (strain ATCC BAA-471 / A3(2) / M145)</name>
    <dbReference type="NCBI Taxonomy" id="100226"/>
    <lineage>
        <taxon>Bacteria</taxon>
        <taxon>Bacillati</taxon>
        <taxon>Actinomycetota</taxon>
        <taxon>Actinomycetes</taxon>
        <taxon>Kitasatosporales</taxon>
        <taxon>Streptomycetaceae</taxon>
        <taxon>Streptomyces</taxon>
        <taxon>Streptomyces albidoflavus group</taxon>
    </lineage>
</organism>
<protein>
    <recommendedName>
        <fullName evidence="1">Serine hydroxymethyltransferase</fullName>
        <shortName evidence="1">SHMT</shortName>
        <shortName evidence="1">Serine methylase</shortName>
        <ecNumber evidence="1">2.1.2.1</ecNumber>
    </recommendedName>
</protein>
<name>GLYA_STRCO</name>
<sequence>MSLLNTPLHELDPDVAAAVDAELDRQQSTLEMIASENFAPVAVMEAQGSVLTNKYAEGYPGRRYYGGCEHVDVVEQIAIDRVKALFGAEHANVQPHSGAQANAAAMFALLKPGDTIMGLNLAHGGHLTHGMKINFSGKLYNVVPYHVGDDGQVDMAEVERLAKETKPKLIVAGWSAYPRQLDFAAFRKVADEVGAYLMVDMAHFAGLVAAGLHPNPVPHAHVVTTTTHKTLGGPRGGVILSTAELAKKINSAVFPGQQGGPLEHVVAAKAVAFKVAASEDFKERQGRTLEGARILAERLVRDDAKAAGVSVLTGGTDVHLVLVDLRDSELDGQQAEDRLHEVGITVNRNAVPNDPRPPMVTSGLRIGTPALATRGFTAEDFAEVADVIAEALKPSYDAEALKARVKTLADKHPLYPGLNK</sequence>
<accession>O86565</accession>
<gene>
    <name evidence="1" type="primary">glyA</name>
    <name type="ordered locus">SCO5470</name>
    <name type="ORF">SC2A11.04c</name>
</gene>
<dbReference type="EC" id="2.1.2.1" evidence="1"/>
<dbReference type="EMBL" id="AL939123">
    <property type="protein sequence ID" value="CAA20173.1"/>
    <property type="molecule type" value="Genomic_DNA"/>
</dbReference>
<dbReference type="PIR" id="T34750">
    <property type="entry name" value="T34750"/>
</dbReference>
<dbReference type="RefSeq" id="NP_629606.1">
    <property type="nucleotide sequence ID" value="NC_003888.3"/>
</dbReference>
<dbReference type="RefSeq" id="WP_003973528.1">
    <property type="nucleotide sequence ID" value="NZ_VNID01000011.1"/>
</dbReference>
<dbReference type="SMR" id="O86565"/>
<dbReference type="FunCoup" id="O86565">
    <property type="interactions" value="593"/>
</dbReference>
<dbReference type="STRING" id="100226.gene:17763122"/>
<dbReference type="PaxDb" id="100226-SCO5470"/>
<dbReference type="GeneID" id="97462169"/>
<dbReference type="KEGG" id="sco:SCO5470"/>
<dbReference type="PATRIC" id="fig|100226.15.peg.5554"/>
<dbReference type="eggNOG" id="COG0112">
    <property type="taxonomic scope" value="Bacteria"/>
</dbReference>
<dbReference type="HOGENOM" id="CLU_022477_2_1_11"/>
<dbReference type="InParanoid" id="O86565"/>
<dbReference type="OrthoDB" id="9803846at2"/>
<dbReference type="PhylomeDB" id="O86565"/>
<dbReference type="UniPathway" id="UPA00193"/>
<dbReference type="UniPathway" id="UPA00288">
    <property type="reaction ID" value="UER01023"/>
</dbReference>
<dbReference type="Proteomes" id="UP000001973">
    <property type="component" value="Chromosome"/>
</dbReference>
<dbReference type="GO" id="GO:0005737">
    <property type="term" value="C:cytoplasm"/>
    <property type="evidence" value="ECO:0000318"/>
    <property type="project" value="GO_Central"/>
</dbReference>
<dbReference type="GO" id="GO:0005829">
    <property type="term" value="C:cytosol"/>
    <property type="evidence" value="ECO:0000318"/>
    <property type="project" value="GO_Central"/>
</dbReference>
<dbReference type="GO" id="GO:0004372">
    <property type="term" value="F:glycine hydroxymethyltransferase activity"/>
    <property type="evidence" value="ECO:0000318"/>
    <property type="project" value="GO_Central"/>
</dbReference>
<dbReference type="GO" id="GO:0030170">
    <property type="term" value="F:pyridoxal phosphate binding"/>
    <property type="evidence" value="ECO:0000318"/>
    <property type="project" value="GO_Central"/>
</dbReference>
<dbReference type="GO" id="GO:0019264">
    <property type="term" value="P:glycine biosynthetic process from serine"/>
    <property type="evidence" value="ECO:0000318"/>
    <property type="project" value="GO_Central"/>
</dbReference>
<dbReference type="GO" id="GO:0035999">
    <property type="term" value="P:tetrahydrofolate interconversion"/>
    <property type="evidence" value="ECO:0007669"/>
    <property type="project" value="UniProtKB-UniRule"/>
</dbReference>
<dbReference type="GO" id="GO:0046653">
    <property type="term" value="P:tetrahydrofolate metabolic process"/>
    <property type="evidence" value="ECO:0000318"/>
    <property type="project" value="GO_Central"/>
</dbReference>
<dbReference type="CDD" id="cd00378">
    <property type="entry name" value="SHMT"/>
    <property type="match status" value="1"/>
</dbReference>
<dbReference type="FunFam" id="3.40.640.10:FF:000001">
    <property type="entry name" value="Serine hydroxymethyltransferase"/>
    <property type="match status" value="1"/>
</dbReference>
<dbReference type="Gene3D" id="3.90.1150.10">
    <property type="entry name" value="Aspartate Aminotransferase, domain 1"/>
    <property type="match status" value="1"/>
</dbReference>
<dbReference type="Gene3D" id="3.40.640.10">
    <property type="entry name" value="Type I PLP-dependent aspartate aminotransferase-like (Major domain)"/>
    <property type="match status" value="1"/>
</dbReference>
<dbReference type="HAMAP" id="MF_00051">
    <property type="entry name" value="SHMT"/>
    <property type="match status" value="1"/>
</dbReference>
<dbReference type="InterPro" id="IPR015424">
    <property type="entry name" value="PyrdxlP-dep_Trfase"/>
</dbReference>
<dbReference type="InterPro" id="IPR015421">
    <property type="entry name" value="PyrdxlP-dep_Trfase_major"/>
</dbReference>
<dbReference type="InterPro" id="IPR015422">
    <property type="entry name" value="PyrdxlP-dep_Trfase_small"/>
</dbReference>
<dbReference type="InterPro" id="IPR001085">
    <property type="entry name" value="Ser_HO-MeTrfase"/>
</dbReference>
<dbReference type="InterPro" id="IPR049943">
    <property type="entry name" value="Ser_HO-MeTrfase-like"/>
</dbReference>
<dbReference type="InterPro" id="IPR019798">
    <property type="entry name" value="Ser_HO-MeTrfase_PLP_BS"/>
</dbReference>
<dbReference type="InterPro" id="IPR039429">
    <property type="entry name" value="SHMT-like_dom"/>
</dbReference>
<dbReference type="NCBIfam" id="NF000586">
    <property type="entry name" value="PRK00011.1"/>
    <property type="match status" value="1"/>
</dbReference>
<dbReference type="PANTHER" id="PTHR11680">
    <property type="entry name" value="SERINE HYDROXYMETHYLTRANSFERASE"/>
    <property type="match status" value="1"/>
</dbReference>
<dbReference type="PANTHER" id="PTHR11680:SF35">
    <property type="entry name" value="SERINE HYDROXYMETHYLTRANSFERASE 1"/>
    <property type="match status" value="1"/>
</dbReference>
<dbReference type="Pfam" id="PF00464">
    <property type="entry name" value="SHMT"/>
    <property type="match status" value="1"/>
</dbReference>
<dbReference type="PIRSF" id="PIRSF000412">
    <property type="entry name" value="SHMT"/>
    <property type="match status" value="1"/>
</dbReference>
<dbReference type="SUPFAM" id="SSF53383">
    <property type="entry name" value="PLP-dependent transferases"/>
    <property type="match status" value="1"/>
</dbReference>
<dbReference type="PROSITE" id="PS00096">
    <property type="entry name" value="SHMT"/>
    <property type="match status" value="1"/>
</dbReference>
<proteinExistence type="inferred from homology"/>
<comment type="function">
    <text evidence="1">Catalyzes the reversible interconversion of serine and glycine with tetrahydrofolate (THF) serving as the one-carbon carrier. This reaction serves as the major source of one-carbon groups required for the biosynthesis of purines, thymidylate, methionine, and other important biomolecules. Also exhibits THF-independent aldolase activity toward beta-hydroxyamino acids, producing glycine and aldehydes, via a retro-aldol mechanism.</text>
</comment>
<comment type="catalytic activity">
    <reaction evidence="1">
        <text>(6R)-5,10-methylene-5,6,7,8-tetrahydrofolate + glycine + H2O = (6S)-5,6,7,8-tetrahydrofolate + L-serine</text>
        <dbReference type="Rhea" id="RHEA:15481"/>
        <dbReference type="ChEBI" id="CHEBI:15377"/>
        <dbReference type="ChEBI" id="CHEBI:15636"/>
        <dbReference type="ChEBI" id="CHEBI:33384"/>
        <dbReference type="ChEBI" id="CHEBI:57305"/>
        <dbReference type="ChEBI" id="CHEBI:57453"/>
        <dbReference type="EC" id="2.1.2.1"/>
    </reaction>
</comment>
<comment type="cofactor">
    <cofactor evidence="1">
        <name>pyridoxal 5'-phosphate</name>
        <dbReference type="ChEBI" id="CHEBI:597326"/>
    </cofactor>
</comment>
<comment type="pathway">
    <text evidence="1">One-carbon metabolism; tetrahydrofolate interconversion.</text>
</comment>
<comment type="pathway">
    <text evidence="1">Amino-acid biosynthesis; glycine biosynthesis; glycine from L-serine: step 1/1.</text>
</comment>
<comment type="subunit">
    <text evidence="1">Homodimer.</text>
</comment>
<comment type="subcellular location">
    <subcellularLocation>
        <location evidence="1">Cytoplasm</location>
    </subcellularLocation>
</comment>
<comment type="similarity">
    <text evidence="1">Belongs to the SHMT family.</text>
</comment>
<reference key="1">
    <citation type="journal article" date="2002" name="Nature">
        <title>Complete genome sequence of the model actinomycete Streptomyces coelicolor A3(2).</title>
        <authorList>
            <person name="Bentley S.D."/>
            <person name="Chater K.F."/>
            <person name="Cerdeno-Tarraga A.-M."/>
            <person name="Challis G.L."/>
            <person name="Thomson N.R."/>
            <person name="James K.D."/>
            <person name="Harris D.E."/>
            <person name="Quail M.A."/>
            <person name="Kieser H."/>
            <person name="Harper D."/>
            <person name="Bateman A."/>
            <person name="Brown S."/>
            <person name="Chandra G."/>
            <person name="Chen C.W."/>
            <person name="Collins M."/>
            <person name="Cronin A."/>
            <person name="Fraser A."/>
            <person name="Goble A."/>
            <person name="Hidalgo J."/>
            <person name="Hornsby T."/>
            <person name="Howarth S."/>
            <person name="Huang C.-H."/>
            <person name="Kieser T."/>
            <person name="Larke L."/>
            <person name="Murphy L.D."/>
            <person name="Oliver K."/>
            <person name="O'Neil S."/>
            <person name="Rabbinowitsch E."/>
            <person name="Rajandream M.A."/>
            <person name="Rutherford K.M."/>
            <person name="Rutter S."/>
            <person name="Seeger K."/>
            <person name="Saunders D."/>
            <person name="Sharp S."/>
            <person name="Squares R."/>
            <person name="Squares S."/>
            <person name="Taylor K."/>
            <person name="Warren T."/>
            <person name="Wietzorrek A."/>
            <person name="Woodward J.R."/>
            <person name="Barrell B.G."/>
            <person name="Parkhill J."/>
            <person name="Hopwood D.A."/>
        </authorList>
    </citation>
    <scope>NUCLEOTIDE SEQUENCE [LARGE SCALE GENOMIC DNA]</scope>
    <source>
        <strain>ATCC BAA-471 / A3(2) / M145</strain>
    </source>
</reference>
<keyword id="KW-0028">Amino-acid biosynthesis</keyword>
<keyword id="KW-0963">Cytoplasm</keyword>
<keyword id="KW-0554">One-carbon metabolism</keyword>
<keyword id="KW-0663">Pyridoxal phosphate</keyword>
<keyword id="KW-1185">Reference proteome</keyword>
<keyword id="KW-0808">Transferase</keyword>